<feature type="chain" id="PRO_1000193016" description="Phosphoribosylformylglycinamidine cyclo-ligase">
    <location>
        <begin position="1"/>
        <end position="345"/>
    </location>
</feature>
<keyword id="KW-0067">ATP-binding</keyword>
<keyword id="KW-0963">Cytoplasm</keyword>
<keyword id="KW-0436">Ligase</keyword>
<keyword id="KW-0547">Nucleotide-binding</keyword>
<keyword id="KW-0658">Purine biosynthesis</keyword>
<protein>
    <recommendedName>
        <fullName evidence="1">Phosphoribosylformylglycinamidine cyclo-ligase</fullName>
        <ecNumber evidence="1">6.3.3.1</ecNumber>
    </recommendedName>
    <alternativeName>
        <fullName evidence="1">AIR synthase</fullName>
    </alternativeName>
    <alternativeName>
        <fullName evidence="1">AIRS</fullName>
    </alternativeName>
    <alternativeName>
        <fullName evidence="1">Phosphoribosyl-aminoimidazole synthetase</fullName>
    </alternativeName>
</protein>
<name>PUR5_ECOSE</name>
<proteinExistence type="inferred from homology"/>
<reference key="1">
    <citation type="journal article" date="2008" name="DNA Res.">
        <title>Complete genome sequence and comparative analysis of the wild-type commensal Escherichia coli strain SE11 isolated from a healthy adult.</title>
        <authorList>
            <person name="Oshima K."/>
            <person name="Toh H."/>
            <person name="Ogura Y."/>
            <person name="Sasamoto H."/>
            <person name="Morita H."/>
            <person name="Park S.-H."/>
            <person name="Ooka T."/>
            <person name="Iyoda S."/>
            <person name="Taylor T.D."/>
            <person name="Hayashi T."/>
            <person name="Itoh K."/>
            <person name="Hattori M."/>
        </authorList>
    </citation>
    <scope>NUCLEOTIDE SEQUENCE [LARGE SCALE GENOMIC DNA]</scope>
    <source>
        <strain>SE11</strain>
    </source>
</reference>
<evidence type="ECO:0000255" key="1">
    <source>
        <dbReference type="HAMAP-Rule" id="MF_00741"/>
    </source>
</evidence>
<dbReference type="EC" id="6.3.3.1" evidence="1"/>
<dbReference type="EMBL" id="AP009240">
    <property type="protein sequence ID" value="BAG78309.1"/>
    <property type="molecule type" value="Genomic_DNA"/>
</dbReference>
<dbReference type="RefSeq" id="WP_012565160.1">
    <property type="nucleotide sequence ID" value="NC_011415.1"/>
</dbReference>
<dbReference type="SMR" id="B6I571"/>
<dbReference type="KEGG" id="ecy:ECSE_2785"/>
<dbReference type="HOGENOM" id="CLU_047116_0_0_6"/>
<dbReference type="UniPathway" id="UPA00074">
    <property type="reaction ID" value="UER00129"/>
</dbReference>
<dbReference type="Proteomes" id="UP000008199">
    <property type="component" value="Chromosome"/>
</dbReference>
<dbReference type="GO" id="GO:0005829">
    <property type="term" value="C:cytosol"/>
    <property type="evidence" value="ECO:0007669"/>
    <property type="project" value="TreeGrafter"/>
</dbReference>
<dbReference type="GO" id="GO:0005524">
    <property type="term" value="F:ATP binding"/>
    <property type="evidence" value="ECO:0007669"/>
    <property type="project" value="UniProtKB-KW"/>
</dbReference>
<dbReference type="GO" id="GO:0004637">
    <property type="term" value="F:phosphoribosylamine-glycine ligase activity"/>
    <property type="evidence" value="ECO:0007669"/>
    <property type="project" value="TreeGrafter"/>
</dbReference>
<dbReference type="GO" id="GO:0004641">
    <property type="term" value="F:phosphoribosylformylglycinamidine cyclo-ligase activity"/>
    <property type="evidence" value="ECO:0007669"/>
    <property type="project" value="UniProtKB-UniRule"/>
</dbReference>
<dbReference type="GO" id="GO:0006189">
    <property type="term" value="P:'de novo' IMP biosynthetic process"/>
    <property type="evidence" value="ECO:0007669"/>
    <property type="project" value="UniProtKB-UniRule"/>
</dbReference>
<dbReference type="GO" id="GO:0046084">
    <property type="term" value="P:adenine biosynthetic process"/>
    <property type="evidence" value="ECO:0007669"/>
    <property type="project" value="TreeGrafter"/>
</dbReference>
<dbReference type="CDD" id="cd02196">
    <property type="entry name" value="PurM"/>
    <property type="match status" value="1"/>
</dbReference>
<dbReference type="FunFam" id="3.30.1330.10:FF:000001">
    <property type="entry name" value="Phosphoribosylformylglycinamidine cyclo-ligase"/>
    <property type="match status" value="1"/>
</dbReference>
<dbReference type="FunFam" id="3.90.650.10:FF:000001">
    <property type="entry name" value="Phosphoribosylformylglycinamidine cyclo-ligase"/>
    <property type="match status" value="1"/>
</dbReference>
<dbReference type="Gene3D" id="3.90.650.10">
    <property type="entry name" value="PurM-like C-terminal domain"/>
    <property type="match status" value="1"/>
</dbReference>
<dbReference type="Gene3D" id="3.30.1330.10">
    <property type="entry name" value="PurM-like, N-terminal domain"/>
    <property type="match status" value="1"/>
</dbReference>
<dbReference type="HAMAP" id="MF_00741">
    <property type="entry name" value="AIRS"/>
    <property type="match status" value="1"/>
</dbReference>
<dbReference type="InterPro" id="IPR010918">
    <property type="entry name" value="PurM-like_C_dom"/>
</dbReference>
<dbReference type="InterPro" id="IPR036676">
    <property type="entry name" value="PurM-like_C_sf"/>
</dbReference>
<dbReference type="InterPro" id="IPR016188">
    <property type="entry name" value="PurM-like_N"/>
</dbReference>
<dbReference type="InterPro" id="IPR036921">
    <property type="entry name" value="PurM-like_N_sf"/>
</dbReference>
<dbReference type="InterPro" id="IPR004733">
    <property type="entry name" value="PurM_cligase"/>
</dbReference>
<dbReference type="NCBIfam" id="TIGR00878">
    <property type="entry name" value="purM"/>
    <property type="match status" value="1"/>
</dbReference>
<dbReference type="PANTHER" id="PTHR10520:SF12">
    <property type="entry name" value="TRIFUNCTIONAL PURINE BIOSYNTHETIC PROTEIN ADENOSINE-3"/>
    <property type="match status" value="1"/>
</dbReference>
<dbReference type="PANTHER" id="PTHR10520">
    <property type="entry name" value="TRIFUNCTIONAL PURINE BIOSYNTHETIC PROTEIN ADENOSINE-3-RELATED"/>
    <property type="match status" value="1"/>
</dbReference>
<dbReference type="Pfam" id="PF00586">
    <property type="entry name" value="AIRS"/>
    <property type="match status" value="1"/>
</dbReference>
<dbReference type="Pfam" id="PF02769">
    <property type="entry name" value="AIRS_C"/>
    <property type="match status" value="1"/>
</dbReference>
<dbReference type="SUPFAM" id="SSF56042">
    <property type="entry name" value="PurM C-terminal domain-like"/>
    <property type="match status" value="1"/>
</dbReference>
<dbReference type="SUPFAM" id="SSF55326">
    <property type="entry name" value="PurM N-terminal domain-like"/>
    <property type="match status" value="1"/>
</dbReference>
<gene>
    <name evidence="1" type="primary">purM</name>
    <name type="ordered locus">ECSE_2785</name>
</gene>
<comment type="catalytic activity">
    <reaction evidence="1">
        <text>2-formamido-N(1)-(5-O-phospho-beta-D-ribosyl)acetamidine + ATP = 5-amino-1-(5-phospho-beta-D-ribosyl)imidazole + ADP + phosphate + H(+)</text>
        <dbReference type="Rhea" id="RHEA:23032"/>
        <dbReference type="ChEBI" id="CHEBI:15378"/>
        <dbReference type="ChEBI" id="CHEBI:30616"/>
        <dbReference type="ChEBI" id="CHEBI:43474"/>
        <dbReference type="ChEBI" id="CHEBI:137981"/>
        <dbReference type="ChEBI" id="CHEBI:147287"/>
        <dbReference type="ChEBI" id="CHEBI:456216"/>
        <dbReference type="EC" id="6.3.3.1"/>
    </reaction>
</comment>
<comment type="pathway">
    <text evidence="1">Purine metabolism; IMP biosynthesis via de novo pathway; 5-amino-1-(5-phospho-D-ribosyl)imidazole from N(2)-formyl-N(1)-(5-phospho-D-ribosyl)glycinamide: step 2/2.</text>
</comment>
<comment type="subcellular location">
    <subcellularLocation>
        <location evidence="1">Cytoplasm</location>
    </subcellularLocation>
</comment>
<comment type="similarity">
    <text evidence="1">Belongs to the AIR synthase family.</text>
</comment>
<accession>B6I571</accession>
<sequence length="345" mass="36933">MTDKTSLSYKDAGVDIDAGNALVGRIKGVVKKTRRPEVMGGLGGFGALYALPQKYREPVLVSGTDGVGTKLRLAMDLKRHDTIGIDLVAMCVNDLVVQGAEPLFFLDYYATGKLDVDTASAVISGIAEGCLQSGCSLVGGETAEMPGMYHGEDYDVAGFCVGVVEKSEIIDGSKVSDGDVLIALGSSGPHSNGYSLVRKILEVSGCDPQTTELDGKPLADHLLAPTRIYVKSVLELIEKVDVHAIAHLTGGGFWENIPRVLPDNTQAVIDESSWQWPEVFNWLQTAGNVERHEMYRTFNCGVGMIIALPAPEVDKALALLNANGENAWKIGIIKASDSEQRVVIE</sequence>
<organism>
    <name type="scientific">Escherichia coli (strain SE11)</name>
    <dbReference type="NCBI Taxonomy" id="409438"/>
    <lineage>
        <taxon>Bacteria</taxon>
        <taxon>Pseudomonadati</taxon>
        <taxon>Pseudomonadota</taxon>
        <taxon>Gammaproteobacteria</taxon>
        <taxon>Enterobacterales</taxon>
        <taxon>Enterobacteriaceae</taxon>
        <taxon>Escherichia</taxon>
    </lineage>
</organism>